<name>URK_ALIF1</name>
<gene>
    <name evidence="1" type="primary">udk</name>
    <name type="ordered locus">VF_1752</name>
</gene>
<organism>
    <name type="scientific">Aliivibrio fischeri (strain ATCC 700601 / ES114)</name>
    <name type="common">Vibrio fischeri</name>
    <dbReference type="NCBI Taxonomy" id="312309"/>
    <lineage>
        <taxon>Bacteria</taxon>
        <taxon>Pseudomonadati</taxon>
        <taxon>Pseudomonadota</taxon>
        <taxon>Gammaproteobacteria</taxon>
        <taxon>Vibrionales</taxon>
        <taxon>Vibrionaceae</taxon>
        <taxon>Aliivibrio</taxon>
    </lineage>
</organism>
<keyword id="KW-0067">ATP-binding</keyword>
<keyword id="KW-0963">Cytoplasm</keyword>
<keyword id="KW-0418">Kinase</keyword>
<keyword id="KW-0547">Nucleotide-binding</keyword>
<keyword id="KW-1185">Reference proteome</keyword>
<keyword id="KW-0808">Transferase</keyword>
<comment type="catalytic activity">
    <reaction evidence="1">
        <text>uridine + ATP = UMP + ADP + H(+)</text>
        <dbReference type="Rhea" id="RHEA:16825"/>
        <dbReference type="ChEBI" id="CHEBI:15378"/>
        <dbReference type="ChEBI" id="CHEBI:16704"/>
        <dbReference type="ChEBI" id="CHEBI:30616"/>
        <dbReference type="ChEBI" id="CHEBI:57865"/>
        <dbReference type="ChEBI" id="CHEBI:456216"/>
        <dbReference type="EC" id="2.7.1.48"/>
    </reaction>
</comment>
<comment type="catalytic activity">
    <reaction evidence="1">
        <text>cytidine + ATP = CMP + ADP + H(+)</text>
        <dbReference type="Rhea" id="RHEA:24674"/>
        <dbReference type="ChEBI" id="CHEBI:15378"/>
        <dbReference type="ChEBI" id="CHEBI:17562"/>
        <dbReference type="ChEBI" id="CHEBI:30616"/>
        <dbReference type="ChEBI" id="CHEBI:60377"/>
        <dbReference type="ChEBI" id="CHEBI:456216"/>
        <dbReference type="EC" id="2.7.1.48"/>
    </reaction>
</comment>
<comment type="pathway">
    <text evidence="1">Pyrimidine metabolism; CTP biosynthesis via salvage pathway; CTP from cytidine: step 1/3.</text>
</comment>
<comment type="pathway">
    <text evidence="1">Pyrimidine metabolism; UMP biosynthesis via salvage pathway; UMP from uridine: step 1/1.</text>
</comment>
<comment type="subcellular location">
    <subcellularLocation>
        <location evidence="1">Cytoplasm</location>
    </subcellularLocation>
</comment>
<comment type="similarity">
    <text evidence="1">Belongs to the uridine kinase family.</text>
</comment>
<sequence>MSENSNHHCIIVGIAGASASGKSLIASTIYNELRAKVGDHQIGVITEDSYYKDQSHLTMEERVKTNYDHPNALDHELLCEHLEQLMRGEAVNIPTYSYTEHTRTSEVDVMTPKKVIILEGILLLTDPRLRNLMHASVFMDTPLDICLLRRARRDVEERGRTMESVFEQYQKTVRPMFMQFIDPSKQHADIIVPRGGKNRIAIDVLKAHISRLLKA</sequence>
<proteinExistence type="inferred from homology"/>
<feature type="chain" id="PRO_1000017913" description="Uridine kinase">
    <location>
        <begin position="1"/>
        <end position="215"/>
    </location>
</feature>
<feature type="binding site" evidence="1">
    <location>
        <begin position="16"/>
        <end position="23"/>
    </location>
    <ligand>
        <name>ATP</name>
        <dbReference type="ChEBI" id="CHEBI:30616"/>
    </ligand>
</feature>
<evidence type="ECO:0000255" key="1">
    <source>
        <dbReference type="HAMAP-Rule" id="MF_00551"/>
    </source>
</evidence>
<accession>Q5E3Z9</accession>
<protein>
    <recommendedName>
        <fullName evidence="1">Uridine kinase</fullName>
        <ecNumber evidence="1">2.7.1.48</ecNumber>
    </recommendedName>
    <alternativeName>
        <fullName evidence="1">Cytidine monophosphokinase</fullName>
    </alternativeName>
    <alternativeName>
        <fullName evidence="1">Uridine monophosphokinase</fullName>
    </alternativeName>
</protein>
<dbReference type="EC" id="2.7.1.48" evidence="1"/>
<dbReference type="EMBL" id="CP000020">
    <property type="protein sequence ID" value="AAW86247.1"/>
    <property type="molecule type" value="Genomic_DNA"/>
</dbReference>
<dbReference type="RefSeq" id="WP_005420153.1">
    <property type="nucleotide sequence ID" value="NZ_CAWLES010000001.1"/>
</dbReference>
<dbReference type="RefSeq" id="YP_205135.1">
    <property type="nucleotide sequence ID" value="NC_006840.2"/>
</dbReference>
<dbReference type="SMR" id="Q5E3Z9"/>
<dbReference type="STRING" id="312309.VF_1752"/>
<dbReference type="EnsemblBacteria" id="AAW86247">
    <property type="protein sequence ID" value="AAW86247"/>
    <property type="gene ID" value="VF_1752"/>
</dbReference>
<dbReference type="GeneID" id="54164451"/>
<dbReference type="KEGG" id="vfi:VF_1752"/>
<dbReference type="PATRIC" id="fig|312309.11.peg.1778"/>
<dbReference type="eggNOG" id="COG0572">
    <property type="taxonomic scope" value="Bacteria"/>
</dbReference>
<dbReference type="HOGENOM" id="CLU_021278_1_2_6"/>
<dbReference type="OrthoDB" id="9777642at2"/>
<dbReference type="UniPathway" id="UPA00574">
    <property type="reaction ID" value="UER00637"/>
</dbReference>
<dbReference type="UniPathway" id="UPA00579">
    <property type="reaction ID" value="UER00640"/>
</dbReference>
<dbReference type="Proteomes" id="UP000000537">
    <property type="component" value="Chromosome I"/>
</dbReference>
<dbReference type="GO" id="GO:0005737">
    <property type="term" value="C:cytoplasm"/>
    <property type="evidence" value="ECO:0007669"/>
    <property type="project" value="UniProtKB-SubCell"/>
</dbReference>
<dbReference type="GO" id="GO:0005524">
    <property type="term" value="F:ATP binding"/>
    <property type="evidence" value="ECO:0007669"/>
    <property type="project" value="UniProtKB-UniRule"/>
</dbReference>
<dbReference type="GO" id="GO:0043771">
    <property type="term" value="F:cytidine kinase activity"/>
    <property type="evidence" value="ECO:0007669"/>
    <property type="project" value="RHEA"/>
</dbReference>
<dbReference type="GO" id="GO:0004849">
    <property type="term" value="F:uridine kinase activity"/>
    <property type="evidence" value="ECO:0007669"/>
    <property type="project" value="UniProtKB-UniRule"/>
</dbReference>
<dbReference type="GO" id="GO:0044211">
    <property type="term" value="P:CTP salvage"/>
    <property type="evidence" value="ECO:0007669"/>
    <property type="project" value="UniProtKB-UniRule"/>
</dbReference>
<dbReference type="GO" id="GO:0044206">
    <property type="term" value="P:UMP salvage"/>
    <property type="evidence" value="ECO:0007669"/>
    <property type="project" value="UniProtKB-UniRule"/>
</dbReference>
<dbReference type="CDD" id="cd02023">
    <property type="entry name" value="UMPK"/>
    <property type="match status" value="1"/>
</dbReference>
<dbReference type="Gene3D" id="3.40.50.300">
    <property type="entry name" value="P-loop containing nucleotide triphosphate hydrolases"/>
    <property type="match status" value="1"/>
</dbReference>
<dbReference type="HAMAP" id="MF_00551">
    <property type="entry name" value="Uridine_kinase"/>
    <property type="match status" value="1"/>
</dbReference>
<dbReference type="InterPro" id="IPR027417">
    <property type="entry name" value="P-loop_NTPase"/>
</dbReference>
<dbReference type="InterPro" id="IPR006083">
    <property type="entry name" value="PRK/URK"/>
</dbReference>
<dbReference type="InterPro" id="IPR026008">
    <property type="entry name" value="Uridine_kinase"/>
</dbReference>
<dbReference type="InterPro" id="IPR000764">
    <property type="entry name" value="Uridine_kinase-like"/>
</dbReference>
<dbReference type="NCBIfam" id="NF004018">
    <property type="entry name" value="PRK05480.1"/>
    <property type="match status" value="1"/>
</dbReference>
<dbReference type="NCBIfam" id="TIGR00235">
    <property type="entry name" value="udk"/>
    <property type="match status" value="1"/>
</dbReference>
<dbReference type="PANTHER" id="PTHR10285">
    <property type="entry name" value="URIDINE KINASE"/>
    <property type="match status" value="1"/>
</dbReference>
<dbReference type="Pfam" id="PF00485">
    <property type="entry name" value="PRK"/>
    <property type="match status" value="1"/>
</dbReference>
<dbReference type="PRINTS" id="PR00988">
    <property type="entry name" value="URIDINKINASE"/>
</dbReference>
<dbReference type="SUPFAM" id="SSF52540">
    <property type="entry name" value="P-loop containing nucleoside triphosphate hydrolases"/>
    <property type="match status" value="1"/>
</dbReference>
<reference key="1">
    <citation type="journal article" date="2005" name="Proc. Natl. Acad. Sci. U.S.A.">
        <title>Complete genome sequence of Vibrio fischeri: a symbiotic bacterium with pathogenic congeners.</title>
        <authorList>
            <person name="Ruby E.G."/>
            <person name="Urbanowski M."/>
            <person name="Campbell J."/>
            <person name="Dunn A."/>
            <person name="Faini M."/>
            <person name="Gunsalus R."/>
            <person name="Lostroh P."/>
            <person name="Lupp C."/>
            <person name="McCann J."/>
            <person name="Millikan D."/>
            <person name="Schaefer A."/>
            <person name="Stabb E."/>
            <person name="Stevens A."/>
            <person name="Visick K."/>
            <person name="Whistler C."/>
            <person name="Greenberg E.P."/>
        </authorList>
    </citation>
    <scope>NUCLEOTIDE SEQUENCE [LARGE SCALE GENOMIC DNA]</scope>
    <source>
        <strain>ATCC 700601 / ES114</strain>
    </source>
</reference>